<evidence type="ECO:0000255" key="1"/>
<evidence type="ECO:0000256" key="2">
    <source>
        <dbReference type="SAM" id="MobiDB-lite"/>
    </source>
</evidence>
<evidence type="ECO:0000303" key="3">
    <source>
    </source>
</evidence>
<evidence type="ECO:0000305" key="4"/>
<reference key="1">
    <citation type="journal article" date="2005" name="Science">
        <title>The transcriptional landscape of the mammalian genome.</title>
        <authorList>
            <person name="Carninci P."/>
            <person name="Kasukawa T."/>
            <person name="Katayama S."/>
            <person name="Gough J."/>
            <person name="Frith M.C."/>
            <person name="Maeda N."/>
            <person name="Oyama R."/>
            <person name="Ravasi T."/>
            <person name="Lenhard B."/>
            <person name="Wells C."/>
            <person name="Kodzius R."/>
            <person name="Shimokawa K."/>
            <person name="Bajic V.B."/>
            <person name="Brenner S.E."/>
            <person name="Batalov S."/>
            <person name="Forrest A.R."/>
            <person name="Zavolan M."/>
            <person name="Davis M.J."/>
            <person name="Wilming L.G."/>
            <person name="Aidinis V."/>
            <person name="Allen J.E."/>
            <person name="Ambesi-Impiombato A."/>
            <person name="Apweiler R."/>
            <person name="Aturaliya R.N."/>
            <person name="Bailey T.L."/>
            <person name="Bansal M."/>
            <person name="Baxter L."/>
            <person name="Beisel K.W."/>
            <person name="Bersano T."/>
            <person name="Bono H."/>
            <person name="Chalk A.M."/>
            <person name="Chiu K.P."/>
            <person name="Choudhary V."/>
            <person name="Christoffels A."/>
            <person name="Clutterbuck D.R."/>
            <person name="Crowe M.L."/>
            <person name="Dalla E."/>
            <person name="Dalrymple B.P."/>
            <person name="de Bono B."/>
            <person name="Della Gatta G."/>
            <person name="di Bernardo D."/>
            <person name="Down T."/>
            <person name="Engstrom P."/>
            <person name="Fagiolini M."/>
            <person name="Faulkner G."/>
            <person name="Fletcher C.F."/>
            <person name="Fukushima T."/>
            <person name="Furuno M."/>
            <person name="Futaki S."/>
            <person name="Gariboldi M."/>
            <person name="Georgii-Hemming P."/>
            <person name="Gingeras T.R."/>
            <person name="Gojobori T."/>
            <person name="Green R.E."/>
            <person name="Gustincich S."/>
            <person name="Harbers M."/>
            <person name="Hayashi Y."/>
            <person name="Hensch T.K."/>
            <person name="Hirokawa N."/>
            <person name="Hill D."/>
            <person name="Huminiecki L."/>
            <person name="Iacono M."/>
            <person name="Ikeo K."/>
            <person name="Iwama A."/>
            <person name="Ishikawa T."/>
            <person name="Jakt M."/>
            <person name="Kanapin A."/>
            <person name="Katoh M."/>
            <person name="Kawasawa Y."/>
            <person name="Kelso J."/>
            <person name="Kitamura H."/>
            <person name="Kitano H."/>
            <person name="Kollias G."/>
            <person name="Krishnan S.P."/>
            <person name="Kruger A."/>
            <person name="Kummerfeld S.K."/>
            <person name="Kurochkin I.V."/>
            <person name="Lareau L.F."/>
            <person name="Lazarevic D."/>
            <person name="Lipovich L."/>
            <person name="Liu J."/>
            <person name="Liuni S."/>
            <person name="McWilliam S."/>
            <person name="Madan Babu M."/>
            <person name="Madera M."/>
            <person name="Marchionni L."/>
            <person name="Matsuda H."/>
            <person name="Matsuzawa S."/>
            <person name="Miki H."/>
            <person name="Mignone F."/>
            <person name="Miyake S."/>
            <person name="Morris K."/>
            <person name="Mottagui-Tabar S."/>
            <person name="Mulder N."/>
            <person name="Nakano N."/>
            <person name="Nakauchi H."/>
            <person name="Ng P."/>
            <person name="Nilsson R."/>
            <person name="Nishiguchi S."/>
            <person name="Nishikawa S."/>
            <person name="Nori F."/>
            <person name="Ohara O."/>
            <person name="Okazaki Y."/>
            <person name="Orlando V."/>
            <person name="Pang K.C."/>
            <person name="Pavan W.J."/>
            <person name="Pavesi G."/>
            <person name="Pesole G."/>
            <person name="Petrovsky N."/>
            <person name="Piazza S."/>
            <person name="Reed J."/>
            <person name="Reid J.F."/>
            <person name="Ring B.Z."/>
            <person name="Ringwald M."/>
            <person name="Rost B."/>
            <person name="Ruan Y."/>
            <person name="Salzberg S.L."/>
            <person name="Sandelin A."/>
            <person name="Schneider C."/>
            <person name="Schoenbach C."/>
            <person name="Sekiguchi K."/>
            <person name="Semple C.A."/>
            <person name="Seno S."/>
            <person name="Sessa L."/>
            <person name="Sheng Y."/>
            <person name="Shibata Y."/>
            <person name="Shimada H."/>
            <person name="Shimada K."/>
            <person name="Silva D."/>
            <person name="Sinclair B."/>
            <person name="Sperling S."/>
            <person name="Stupka E."/>
            <person name="Sugiura K."/>
            <person name="Sultana R."/>
            <person name="Takenaka Y."/>
            <person name="Taki K."/>
            <person name="Tammoja K."/>
            <person name="Tan S.L."/>
            <person name="Tang S."/>
            <person name="Taylor M.S."/>
            <person name="Tegner J."/>
            <person name="Teichmann S.A."/>
            <person name="Ueda H.R."/>
            <person name="van Nimwegen E."/>
            <person name="Verardo R."/>
            <person name="Wei C.L."/>
            <person name="Yagi K."/>
            <person name="Yamanishi H."/>
            <person name="Zabarovsky E."/>
            <person name="Zhu S."/>
            <person name="Zimmer A."/>
            <person name="Hide W."/>
            <person name="Bult C."/>
            <person name="Grimmond S.M."/>
            <person name="Teasdale R.D."/>
            <person name="Liu E.T."/>
            <person name="Brusic V."/>
            <person name="Quackenbush J."/>
            <person name="Wahlestedt C."/>
            <person name="Mattick J.S."/>
            <person name="Hume D.A."/>
            <person name="Kai C."/>
            <person name="Sasaki D."/>
            <person name="Tomaru Y."/>
            <person name="Fukuda S."/>
            <person name="Kanamori-Katayama M."/>
            <person name="Suzuki M."/>
            <person name="Aoki J."/>
            <person name="Arakawa T."/>
            <person name="Iida J."/>
            <person name="Imamura K."/>
            <person name="Itoh M."/>
            <person name="Kato T."/>
            <person name="Kawaji H."/>
            <person name="Kawagashira N."/>
            <person name="Kawashima T."/>
            <person name="Kojima M."/>
            <person name="Kondo S."/>
            <person name="Konno H."/>
            <person name="Nakano K."/>
            <person name="Ninomiya N."/>
            <person name="Nishio T."/>
            <person name="Okada M."/>
            <person name="Plessy C."/>
            <person name="Shibata K."/>
            <person name="Shiraki T."/>
            <person name="Suzuki S."/>
            <person name="Tagami M."/>
            <person name="Waki K."/>
            <person name="Watahiki A."/>
            <person name="Okamura-Oho Y."/>
            <person name="Suzuki H."/>
            <person name="Kawai J."/>
            <person name="Hayashizaki Y."/>
        </authorList>
    </citation>
    <scope>NUCLEOTIDE SEQUENCE [LARGE SCALE MRNA] (ISOFORMS 1 AND 2)</scope>
    <source>
        <strain>C57BL/6J</strain>
        <strain>NOD</strain>
        <tissue>Skin</tissue>
    </source>
</reference>
<reference key="2">
    <citation type="journal article" date="2009" name="PLoS Biol.">
        <title>Lineage-specific biology revealed by a finished genome assembly of the mouse.</title>
        <authorList>
            <person name="Church D.M."/>
            <person name="Goodstadt L."/>
            <person name="Hillier L.W."/>
            <person name="Zody M.C."/>
            <person name="Goldstein S."/>
            <person name="She X."/>
            <person name="Bult C.J."/>
            <person name="Agarwala R."/>
            <person name="Cherry J.L."/>
            <person name="DiCuccio M."/>
            <person name="Hlavina W."/>
            <person name="Kapustin Y."/>
            <person name="Meric P."/>
            <person name="Maglott D."/>
            <person name="Birtle Z."/>
            <person name="Marques A.C."/>
            <person name="Graves T."/>
            <person name="Zhou S."/>
            <person name="Teague B."/>
            <person name="Potamousis K."/>
            <person name="Churas C."/>
            <person name="Place M."/>
            <person name="Herschleb J."/>
            <person name="Runnheim R."/>
            <person name="Forrest D."/>
            <person name="Amos-Landgraf J."/>
            <person name="Schwartz D.C."/>
            <person name="Cheng Z."/>
            <person name="Lindblad-Toh K."/>
            <person name="Eichler E.E."/>
            <person name="Ponting C.P."/>
        </authorList>
    </citation>
    <scope>NUCLEOTIDE SEQUENCE [LARGE SCALE GENOMIC DNA]</scope>
    <source>
        <strain>C57BL/6J</strain>
    </source>
</reference>
<reference key="3">
    <citation type="journal article" date="2004" name="Genome Res.">
        <title>The status, quality, and expansion of the NIH full-length cDNA project: the Mammalian Gene Collection (MGC).</title>
        <authorList>
            <consortium name="The MGC Project Team"/>
        </authorList>
    </citation>
    <scope>NUCLEOTIDE SEQUENCE [LARGE SCALE MRNA] (ISOFORM 1)</scope>
    <source>
        <strain>FVB/N</strain>
        <tissue>Kidney</tissue>
    </source>
</reference>
<sequence length="631" mass="67945">MATWNRPHPRQPVAPEPAAEDDSQQPLGRELSEANRFAYAALCGFSLSQLFPEPEQSSFCTEFVTGLVKWLHLSESVLPTIMAFASGLGGEGADIFAQTLLQDPILRDNPSAVSQDLLSFSLKNGHYDARARVLVCHVTSLLQVPMEELDILEEVFLESLKDAKEEESETAEASRKRKEKRRKWKRYLLIGLATVGGGTVIGVTGGLAAPLVAAGAATIIGSAGAAALGSVAGIAVMTSLFGAAGAGLTGYKMKKRVGAIEEFMFLPLTEGRQLHITIAITGWLGSGRYRTFNAPWMALARSQEQYCLAWEAKYLMELGNALETILSGLANMVAQEALKYTVLSGIVAALTWPASLLSVANVIDNPWGVCLHRSAEVGKHLAHILLSRQQGRRPVTLIGFSLGARVIYFCLQEMAQEQDCQGIIEDVVLLGAPVEGDPKHWEPFRNVVSGRIINGYCRGDWLLSFVYRTSSVQLRVAGLQPVLLQDRRMENVDLTSVVNGHLDYAKQMDAILKVVGIRTKPGWREKGLPLAPGSLPQEEPLQTAIVSTDEIILQDGQSQGPASEDSLKTTIPSSASQAQMPAGLNQSTEDSLSTAAAPAEGHLICSHGVGPNPLGCPDCTHGTQESCTELD</sequence>
<name>TMCO4_MOUSE</name>
<keyword id="KW-0025">Alternative splicing</keyword>
<keyword id="KW-0175">Coiled coil</keyword>
<keyword id="KW-0472">Membrane</keyword>
<keyword id="KW-1185">Reference proteome</keyword>
<keyword id="KW-0812">Transmembrane</keyword>
<keyword id="KW-1133">Transmembrane helix</keyword>
<comment type="subcellular location">
    <subcellularLocation>
        <location evidence="4">Membrane</location>
        <topology evidence="4">Multi-pass membrane protein</topology>
    </subcellularLocation>
</comment>
<comment type="alternative products">
    <event type="alternative splicing"/>
    <isoform>
        <id>Q91WU4-1</id>
        <name>1</name>
        <sequence type="displayed"/>
    </isoform>
    <isoform>
        <id>Q91WU4-2</id>
        <name>2</name>
        <sequence type="described" ref="VSP_028243 VSP_028244 VSP_028245"/>
    </isoform>
</comment>
<comment type="similarity">
    <text evidence="4">Belongs to the TMCO4 family.</text>
</comment>
<dbReference type="EMBL" id="AK014571">
    <property type="protein sequence ID" value="BAB29436.1"/>
    <property type="molecule type" value="mRNA"/>
</dbReference>
<dbReference type="EMBL" id="AK029092">
    <property type="protein sequence ID" value="BAC26291.1"/>
    <property type="molecule type" value="mRNA"/>
</dbReference>
<dbReference type="EMBL" id="AK054337">
    <property type="protein sequence ID" value="BAC35737.1"/>
    <property type="molecule type" value="mRNA"/>
</dbReference>
<dbReference type="EMBL" id="AK170619">
    <property type="protein sequence ID" value="BAE41914.1"/>
    <property type="molecule type" value="mRNA"/>
</dbReference>
<dbReference type="EMBL" id="AK171189">
    <property type="protein sequence ID" value="BAE42299.1"/>
    <property type="molecule type" value="mRNA"/>
</dbReference>
<dbReference type="EMBL" id="AL805923">
    <property type="status" value="NOT_ANNOTATED_CDS"/>
    <property type="molecule type" value="Genomic_DNA"/>
</dbReference>
<dbReference type="EMBL" id="BC013471">
    <property type="protein sequence ID" value="AAH13471.1"/>
    <property type="molecule type" value="mRNA"/>
</dbReference>
<dbReference type="CCDS" id="CCDS18837.1">
    <molecule id="Q91WU4-1"/>
</dbReference>
<dbReference type="RefSeq" id="NP_001292352.1">
    <molecule id="Q91WU4-1"/>
    <property type="nucleotide sequence ID" value="NM_001305423.1"/>
</dbReference>
<dbReference type="RefSeq" id="NP_084133.1">
    <molecule id="Q91WU4-1"/>
    <property type="nucleotide sequence ID" value="NM_029857.3"/>
</dbReference>
<dbReference type="RefSeq" id="XP_006539343.1">
    <molecule id="Q91WU4-1"/>
    <property type="nucleotide sequence ID" value="XM_006539280.5"/>
</dbReference>
<dbReference type="FunCoup" id="Q91WU4">
    <property type="interactions" value="14"/>
</dbReference>
<dbReference type="STRING" id="10090.ENSMUSP00000059320"/>
<dbReference type="ESTHER" id="mouse-tmco4">
    <property type="family name" value="Duf_726"/>
</dbReference>
<dbReference type="iPTMnet" id="Q91WU4"/>
<dbReference type="PhosphoSitePlus" id="Q91WU4"/>
<dbReference type="PaxDb" id="10090-ENSMUSP00000059320"/>
<dbReference type="ProteomicsDB" id="259572">
    <molecule id="Q91WU4-1"/>
</dbReference>
<dbReference type="ProteomicsDB" id="259573">
    <molecule id="Q91WU4-2"/>
</dbReference>
<dbReference type="Antibodypedia" id="3034">
    <property type="antibodies" value="77 antibodies from 14 providers"/>
</dbReference>
<dbReference type="DNASU" id="77056"/>
<dbReference type="Ensembl" id="ENSMUST00000043042.10">
    <molecule id="Q91WU4-1"/>
    <property type="protein sequence ID" value="ENSMUSP00000041388.4"/>
    <property type="gene ID" value="ENSMUSG00000041143.17"/>
</dbReference>
<dbReference type="Ensembl" id="ENSMUST00000050949.9">
    <molecule id="Q91WU4-1"/>
    <property type="protein sequence ID" value="ENSMUSP00000059320.3"/>
    <property type="gene ID" value="ENSMUSG00000041143.17"/>
</dbReference>
<dbReference type="GeneID" id="77056"/>
<dbReference type="KEGG" id="mmu:77056"/>
<dbReference type="UCSC" id="uc008vlp.2">
    <molecule id="Q91WU4-1"/>
    <property type="organism name" value="mouse"/>
</dbReference>
<dbReference type="AGR" id="MGI:1924306"/>
<dbReference type="CTD" id="255104"/>
<dbReference type="MGI" id="MGI:1924306">
    <property type="gene designation" value="Tmco4"/>
</dbReference>
<dbReference type="VEuPathDB" id="HostDB:ENSMUSG00000041143"/>
<dbReference type="eggNOG" id="KOG2385">
    <property type="taxonomic scope" value="Eukaryota"/>
</dbReference>
<dbReference type="GeneTree" id="ENSGT00390000001400"/>
<dbReference type="HOGENOM" id="CLU_016865_0_1_1"/>
<dbReference type="InParanoid" id="Q91WU4"/>
<dbReference type="OMA" id="AGLYSYC"/>
<dbReference type="OrthoDB" id="277931at2759"/>
<dbReference type="PhylomeDB" id="Q91WU4"/>
<dbReference type="TreeFam" id="TF312951"/>
<dbReference type="BioGRID-ORCS" id="77056">
    <property type="hits" value="1 hit in 76 CRISPR screens"/>
</dbReference>
<dbReference type="PRO" id="PR:Q91WU4"/>
<dbReference type="Proteomes" id="UP000000589">
    <property type="component" value="Chromosome 4"/>
</dbReference>
<dbReference type="RNAct" id="Q91WU4">
    <property type="molecule type" value="protein"/>
</dbReference>
<dbReference type="Bgee" id="ENSMUSG00000041143">
    <property type="expression patterns" value="Expressed in urinary bladder urothelium and 95 other cell types or tissues"/>
</dbReference>
<dbReference type="ExpressionAtlas" id="Q91WU4">
    <property type="expression patterns" value="baseline and differential"/>
</dbReference>
<dbReference type="GO" id="GO:0016020">
    <property type="term" value="C:membrane"/>
    <property type="evidence" value="ECO:0007669"/>
    <property type="project" value="UniProtKB-SubCell"/>
</dbReference>
<dbReference type="InterPro" id="IPR029058">
    <property type="entry name" value="AB_hydrolase_fold"/>
</dbReference>
<dbReference type="InterPro" id="IPR007941">
    <property type="entry name" value="DUF726"/>
</dbReference>
<dbReference type="PANTHER" id="PTHR17920:SF3">
    <property type="entry name" value="TRANSMEMBRANE AND COILED-COIL DOMAIN-CONTAINING PROTEIN 4"/>
    <property type="match status" value="1"/>
</dbReference>
<dbReference type="PANTHER" id="PTHR17920">
    <property type="entry name" value="TRANSMEMBRANE AND COILED-COIL DOMAIN-CONTAINING PROTEIN 4 TMCO4"/>
    <property type="match status" value="1"/>
</dbReference>
<dbReference type="Pfam" id="PF05277">
    <property type="entry name" value="DUF726"/>
    <property type="match status" value="1"/>
</dbReference>
<dbReference type="SUPFAM" id="SSF53474">
    <property type="entry name" value="alpha/beta-Hydrolases"/>
    <property type="match status" value="1"/>
</dbReference>
<proteinExistence type="evidence at transcript level"/>
<feature type="chain" id="PRO_0000305150" description="Transmembrane and coiled-coil domain-containing protein 4">
    <location>
        <begin position="1"/>
        <end position="631"/>
    </location>
</feature>
<feature type="transmembrane region" description="Helical" evidence="1">
    <location>
        <begin position="200"/>
        <end position="220"/>
    </location>
</feature>
<feature type="transmembrane region" description="Helical" evidence="1">
    <location>
        <begin position="228"/>
        <end position="248"/>
    </location>
</feature>
<feature type="transmembrane region" description="Helical" evidence="1">
    <location>
        <begin position="343"/>
        <end position="363"/>
    </location>
</feature>
<feature type="region of interest" description="Disordered" evidence="2">
    <location>
        <begin position="1"/>
        <end position="27"/>
    </location>
</feature>
<feature type="region of interest" description="Disordered" evidence="2">
    <location>
        <begin position="555"/>
        <end position="595"/>
    </location>
</feature>
<feature type="coiled-coil region" evidence="1">
    <location>
        <begin position="156"/>
        <end position="183"/>
    </location>
</feature>
<feature type="compositionally biased region" description="Polar residues" evidence="2">
    <location>
        <begin position="568"/>
        <end position="594"/>
    </location>
</feature>
<feature type="splice variant" id="VSP_028243" description="In isoform 2." evidence="3">
    <location>
        <begin position="191"/>
        <end position="246"/>
    </location>
</feature>
<feature type="splice variant" id="VSP_028244" description="In isoform 2." evidence="3">
    <original>DCQ</original>
    <variation>VSG</variation>
    <location>
        <begin position="419"/>
        <end position="421"/>
    </location>
</feature>
<feature type="splice variant" id="VSP_028245" description="In isoform 2." evidence="3">
    <location>
        <begin position="422"/>
        <end position="631"/>
    </location>
</feature>
<feature type="sequence conflict" description="In Ref. 3; AAH13471." evidence="4" ref="3">
    <original>I</original>
    <variation>M</variation>
    <location>
        <position position="81"/>
    </location>
</feature>
<feature type="sequence conflict" description="In Ref. 3; AAH13471." evidence="4" ref="3">
    <original>A</original>
    <variation>T</variation>
    <location>
        <position position="163"/>
    </location>
</feature>
<feature type="sequence conflict" description="In Ref. 3; AAH13471." evidence="4" ref="3">
    <original>R</original>
    <variation>G</variation>
    <location>
        <position position="524"/>
    </location>
</feature>
<feature type="sequence conflict" description="In Ref. 3; AAH13471." evidence="4" ref="3">
    <original>I</original>
    <variation>T</variation>
    <location>
        <position position="551"/>
    </location>
</feature>
<gene>
    <name type="primary">Tmco4</name>
</gene>
<organism>
    <name type="scientific">Mus musculus</name>
    <name type="common">Mouse</name>
    <dbReference type="NCBI Taxonomy" id="10090"/>
    <lineage>
        <taxon>Eukaryota</taxon>
        <taxon>Metazoa</taxon>
        <taxon>Chordata</taxon>
        <taxon>Craniata</taxon>
        <taxon>Vertebrata</taxon>
        <taxon>Euteleostomi</taxon>
        <taxon>Mammalia</taxon>
        <taxon>Eutheria</taxon>
        <taxon>Euarchontoglires</taxon>
        <taxon>Glires</taxon>
        <taxon>Rodentia</taxon>
        <taxon>Myomorpha</taxon>
        <taxon>Muroidea</taxon>
        <taxon>Muridae</taxon>
        <taxon>Murinae</taxon>
        <taxon>Mus</taxon>
        <taxon>Mus</taxon>
    </lineage>
</organism>
<protein>
    <recommendedName>
        <fullName>Transmembrane and coiled-coil domain-containing protein 4</fullName>
    </recommendedName>
</protein>
<accession>Q91WU4</accession>
<accession>Q8BIX8</accession>
<accession>Q9D675</accession>